<keyword id="KW-0112">Calmodulin-binding</keyword>
<keyword id="KW-0238">DNA-binding</keyword>
<keyword id="KW-0325">Glycoprotein</keyword>
<keyword id="KW-1185">Reference proteome</keyword>
<keyword id="KW-0678">Repressor</keyword>
<keyword id="KW-0964">Secreted</keyword>
<keyword id="KW-0732">Signal</keyword>
<keyword id="KW-0804">Transcription</keyword>
<keyword id="KW-0805">Transcription regulation</keyword>
<reference key="1">
    <citation type="journal article" date="2004" name="Genome Res.">
        <title>The status, quality, and expansion of the NIH full-length cDNA project: the Mammalian Gene Collection (MGC).</title>
        <authorList>
            <consortium name="The MGC Project Team"/>
        </authorList>
    </citation>
    <scope>NUCLEOTIDE SEQUENCE [LARGE SCALE MRNA]</scope>
    <source>
        <tissue>Lung</tissue>
    </source>
</reference>
<reference key="2">
    <citation type="journal article" date="1998" name="J. Biol. Chem.">
        <title>Aortic carboxypeptidase-like protein, a novel protein with discoidin and carboxypeptidase-like domains, is up-regulated during vascular smooth muscle cell differentiation.</title>
        <authorList>
            <person name="Layne M.D."/>
            <person name="Endege W.O."/>
            <person name="Jain M.K."/>
            <person name="Yet S.-F."/>
            <person name="Hsieh C.-M."/>
            <person name="Chin M.T."/>
            <person name="Perrella M.A."/>
            <person name="Blanar M.A."/>
            <person name="Haber E."/>
            <person name="Lee M.-E."/>
        </authorList>
    </citation>
    <scope>TISSUE SPECIFICITY</scope>
    <scope>DEVELOPMENTAL STAGE</scope>
</reference>
<reference key="3">
    <citation type="journal article" date="2001" name="Gene">
        <title>Gene structure and expression of the mouse adipocyte enhancer-binding protein.</title>
        <authorList>
            <person name="Ro H.-S."/>
            <person name="Kim S.-W."/>
            <person name="Wu D."/>
            <person name="Webber C."/>
            <person name="Nicholson T.E."/>
        </authorList>
    </citation>
    <scope>TISSUE SPECIFICITY</scope>
</reference>
<gene>
    <name type="primary">Aebp1</name>
    <name type="synonym">Aclp</name>
</gene>
<proteinExistence type="evidence at transcript level"/>
<sequence length="1128" mass="128061">MAAVRTASLLCGLLALLALCPEGSPQTVLTDDEIQEFLEGFLSEFETQSPPREDDVEAQPLPEPTQRARKSKAGGKPRADAEAPPEKNKDKEKKGKKDKGPKAAKHLEGSTRPTKKPKEKPPKATKKPKEKPPKATKKPKEKPPKATKKPKEKPPKATKRPSAGKRFSTVAPLETPERSLTSPSNPGTRELPEERGRTSLNTWQGQGEETQVEARQHRPEPEEETEMPTLDYNDQIEREDYEDFEYIRRQKQPRPTPSRKRIWPEPPEEKTQEPEERKEVDPPLKPLLPPDYGDGYLIPNYDDLDYYFPHPPPQKPDVGQEVDEEKEELKKPKKEGSSPKEDTEDKWAAEKNKDHKAGPRKGEELEEEWGPVEKIKCPPIGMESHRIEDNQIRASSMLRHGLGAQRGRLNMQAGANEDDYYDGAWCAEDESQTQWIEVDTRRTTRFTGVITQGRDSSIHDDFVTTFFVGFSNDSQTWVMYTNGYEEMTFHGNVDKDTPVLSELPEPVVARFIRIYPLTWNGSLCMRLEVLGCPVTPVYSYYAQNEVVTTDSLDFRHHSYKDMRQLMKVVNEECPTITRTYSLGKSSRGLKIYAMEISDNPGEHELGEPEFRYTAGMHGNEVLGRELLLLLMQYLCHEYRDGNPRVRNLVQDTRIHLVPSLNPDGYEVAAQMGSEFGNWALGLWTEEGFDIFEDFPDLNSVLWAAEEKKWVPYRVPNNNLPIPERYLSPDATVSTEVRAIISWMEKNPFVLGANLNGGERLVSYPYDMARTPSQEQLLAAALAAARGEDEDEVSEAQETPDHAIFRWLAISFASAHLTMTEPYRGGCQAQDYTSGMGIVNGAKWNPRSGTFNDFSYLHTNCLELSIYLGCDKFPHESELPREWENNKEALLTFMEQVHRGIKGVVTDEQGIPIANATISVSGINHGVKTASGGDYWRILNPGEYRVTAHAEGYTSSAKICNVDYDIGATQCNFILARSNWKRIREILAMNGNRPILRVDPSRPMTPQQRRLQQRRLRYRLRMREQMRLRRLNSTTGPATSPTPALTLPPSPTPGSTSRLWEILPTTAAGWEESETETYTEVVTEFETEYGPDLEVEELEEEEEEEEEMDTGLTFPVTTVETYTVNFGDF</sequence>
<feature type="signal peptide" evidence="4">
    <location>
        <begin position="1"/>
        <end position="25"/>
    </location>
</feature>
<feature type="chain" id="PRO_0000333191" description="Adipocyte enhancer-binding protein 1">
    <location>
        <begin position="26"/>
        <end position="1128"/>
    </location>
</feature>
<feature type="domain" description="F5/8 type C" evidence="5">
    <location>
        <begin position="375"/>
        <end position="532"/>
    </location>
</feature>
<feature type="domain" description="Peptidase M14" evidence="6">
    <location>
        <begin position="555"/>
        <end position="896"/>
    </location>
</feature>
<feature type="region of interest" description="Disordered" evidence="7">
    <location>
        <begin position="40"/>
        <end position="368"/>
    </location>
</feature>
<feature type="region of interest" description="Required for DNA-binding and interaction with NFKBIA" evidence="1">
    <location>
        <begin position="382"/>
        <end position="547"/>
    </location>
</feature>
<feature type="region of interest" description="Interaction with MAPK1 and MAPK3" evidence="1">
    <location>
        <begin position="413"/>
        <end position="616"/>
    </location>
</feature>
<feature type="region of interest" description="Interaction with PTEN" evidence="1">
    <location>
        <begin position="547"/>
        <end position="977"/>
    </location>
</feature>
<feature type="region of interest" description="Required for transcriptional repression" evidence="1">
    <location>
        <begin position="933"/>
        <end position="1128"/>
    </location>
</feature>
<feature type="region of interest" description="Interaction with MAPK1 and MAPK3" evidence="1">
    <location>
        <begin position="998"/>
        <end position="1128"/>
    </location>
</feature>
<feature type="region of interest" description="Disordered" evidence="7">
    <location>
        <begin position="1027"/>
        <end position="1056"/>
    </location>
</feature>
<feature type="compositionally biased region" description="Basic and acidic residues" evidence="7">
    <location>
        <begin position="77"/>
        <end position="109"/>
    </location>
</feature>
<feature type="compositionally biased region" description="Basic residues" evidence="7">
    <location>
        <begin position="113"/>
        <end position="163"/>
    </location>
</feature>
<feature type="compositionally biased region" description="Polar residues" evidence="7">
    <location>
        <begin position="178"/>
        <end position="187"/>
    </location>
</feature>
<feature type="compositionally biased region" description="Polar residues" evidence="7">
    <location>
        <begin position="198"/>
        <end position="209"/>
    </location>
</feature>
<feature type="compositionally biased region" description="Basic residues" evidence="7">
    <location>
        <begin position="249"/>
        <end position="261"/>
    </location>
</feature>
<feature type="compositionally biased region" description="Basic and acidic residues" evidence="7">
    <location>
        <begin position="267"/>
        <end position="282"/>
    </location>
</feature>
<feature type="compositionally biased region" description="Basic and acidic residues" evidence="7">
    <location>
        <begin position="327"/>
        <end position="363"/>
    </location>
</feature>
<feature type="compositionally biased region" description="Low complexity" evidence="7">
    <location>
        <begin position="1030"/>
        <end position="1044"/>
    </location>
</feature>
<feature type="glycosylation site" description="N-linked (GlcNAc...) asparagine" evidence="4">
    <location>
        <position position="520"/>
    </location>
</feature>
<dbReference type="EMBL" id="BC133065">
    <property type="protein sequence ID" value="AAI33066.1"/>
    <property type="molecule type" value="mRNA"/>
</dbReference>
<dbReference type="RefSeq" id="NP_001094440.1">
    <property type="nucleotide sequence ID" value="NM_001100970.1"/>
</dbReference>
<dbReference type="RefSeq" id="XP_063129296.1">
    <property type="nucleotide sequence ID" value="XM_063273226.1"/>
</dbReference>
<dbReference type="SMR" id="A2RUV9"/>
<dbReference type="FunCoup" id="A2RUV9">
    <property type="interactions" value="379"/>
</dbReference>
<dbReference type="STRING" id="10116.ENSRNOP00000018846"/>
<dbReference type="MEROPS" id="M14.951"/>
<dbReference type="GlyCosmos" id="A2RUV9">
    <property type="glycosylation" value="1 site, No reported glycans"/>
</dbReference>
<dbReference type="GlyGen" id="A2RUV9">
    <property type="glycosylation" value="4 sites"/>
</dbReference>
<dbReference type="PhosphoSitePlus" id="A2RUV9"/>
<dbReference type="PaxDb" id="10116-ENSRNOP00000018846"/>
<dbReference type="Ensembl" id="ENSRNOT00000018846.7">
    <property type="protein sequence ID" value="ENSRNOP00000018846.7"/>
    <property type="gene ID" value="ENSRNOG00000013720.7"/>
</dbReference>
<dbReference type="GeneID" id="305494"/>
<dbReference type="KEGG" id="rno:305494"/>
<dbReference type="UCSC" id="RGD:1306922">
    <property type="organism name" value="rat"/>
</dbReference>
<dbReference type="AGR" id="RGD:1306922"/>
<dbReference type="CTD" id="165"/>
<dbReference type="RGD" id="1306922">
    <property type="gene designation" value="Aebp1"/>
</dbReference>
<dbReference type="eggNOG" id="KOG2649">
    <property type="taxonomic scope" value="Eukaryota"/>
</dbReference>
<dbReference type="GeneTree" id="ENSGT00940000158323"/>
<dbReference type="HOGENOM" id="CLU_006722_0_1_1"/>
<dbReference type="InParanoid" id="A2RUV9"/>
<dbReference type="OMA" id="VIMYIPE"/>
<dbReference type="OrthoDB" id="10249045at2759"/>
<dbReference type="PhylomeDB" id="A2RUV9"/>
<dbReference type="TreeFam" id="TF315592"/>
<dbReference type="PRO" id="PR:A2RUV9"/>
<dbReference type="Proteomes" id="UP000002494">
    <property type="component" value="Chromosome 14"/>
</dbReference>
<dbReference type="GO" id="GO:0005576">
    <property type="term" value="C:extracellular region"/>
    <property type="evidence" value="ECO:0007669"/>
    <property type="project" value="UniProtKB-SubCell"/>
</dbReference>
<dbReference type="GO" id="GO:0005516">
    <property type="term" value="F:calmodulin binding"/>
    <property type="evidence" value="ECO:0007669"/>
    <property type="project" value="UniProtKB-KW"/>
</dbReference>
<dbReference type="GO" id="GO:0004180">
    <property type="term" value="F:carboxypeptidase activity"/>
    <property type="evidence" value="ECO:0000266"/>
    <property type="project" value="RGD"/>
</dbReference>
<dbReference type="GO" id="GO:0005518">
    <property type="term" value="F:collagen binding"/>
    <property type="evidence" value="ECO:0000250"/>
    <property type="project" value="UniProtKB"/>
</dbReference>
<dbReference type="GO" id="GO:0001227">
    <property type="term" value="F:DNA-binding transcription repressor activity, RNA polymerase II-specific"/>
    <property type="evidence" value="ECO:0000266"/>
    <property type="project" value="RGD"/>
</dbReference>
<dbReference type="GO" id="GO:0000977">
    <property type="term" value="F:RNA polymerase II transcription regulatory region sequence-specific DNA binding"/>
    <property type="evidence" value="ECO:0000266"/>
    <property type="project" value="RGD"/>
</dbReference>
<dbReference type="GO" id="GO:0008270">
    <property type="term" value="F:zinc ion binding"/>
    <property type="evidence" value="ECO:0007669"/>
    <property type="project" value="InterPro"/>
</dbReference>
<dbReference type="GO" id="GO:0000122">
    <property type="term" value="P:negative regulation of transcription by RNA polymerase II"/>
    <property type="evidence" value="ECO:0000266"/>
    <property type="project" value="RGD"/>
</dbReference>
<dbReference type="GO" id="GO:0006508">
    <property type="term" value="P:proteolysis"/>
    <property type="evidence" value="ECO:0007669"/>
    <property type="project" value="InterPro"/>
</dbReference>
<dbReference type="GO" id="GO:1904026">
    <property type="term" value="P:regulation of collagen fibril organization"/>
    <property type="evidence" value="ECO:0000250"/>
    <property type="project" value="UniProtKB"/>
</dbReference>
<dbReference type="GO" id="GO:0006355">
    <property type="term" value="P:regulation of DNA-templated transcription"/>
    <property type="evidence" value="ECO:0000266"/>
    <property type="project" value="RGD"/>
</dbReference>
<dbReference type="CDD" id="cd00057">
    <property type="entry name" value="FA58C"/>
    <property type="match status" value="1"/>
</dbReference>
<dbReference type="CDD" id="cd11308">
    <property type="entry name" value="Peptidase_M14NE-CP-C_like"/>
    <property type="match status" value="1"/>
</dbReference>
<dbReference type="FunFam" id="2.60.120.260:FF:000068">
    <property type="entry name" value="Adipocyte enhancer-binding protein 1"/>
    <property type="match status" value="1"/>
</dbReference>
<dbReference type="FunFam" id="3.40.630.10:FF:000007">
    <property type="entry name" value="Carboxypeptidase X (M14 family), member 1"/>
    <property type="match status" value="1"/>
</dbReference>
<dbReference type="FunFam" id="2.60.40.1120:FF:000007">
    <property type="entry name" value="Carboxypeptidase X, M14 family member 2"/>
    <property type="match status" value="1"/>
</dbReference>
<dbReference type="Gene3D" id="2.60.40.1120">
    <property type="entry name" value="Carboxypeptidase-like, regulatory domain"/>
    <property type="match status" value="1"/>
</dbReference>
<dbReference type="Gene3D" id="2.60.120.260">
    <property type="entry name" value="Galactose-binding domain-like"/>
    <property type="match status" value="1"/>
</dbReference>
<dbReference type="Gene3D" id="3.40.630.10">
    <property type="entry name" value="Zn peptidases"/>
    <property type="match status" value="1"/>
</dbReference>
<dbReference type="InterPro" id="IPR008969">
    <property type="entry name" value="CarboxyPept-like_regulatory"/>
</dbReference>
<dbReference type="InterPro" id="IPR000421">
    <property type="entry name" value="FA58C"/>
</dbReference>
<dbReference type="InterPro" id="IPR008979">
    <property type="entry name" value="Galactose-bd-like_sf"/>
</dbReference>
<dbReference type="InterPro" id="IPR000834">
    <property type="entry name" value="Peptidase_M14"/>
</dbReference>
<dbReference type="InterPro" id="IPR050753">
    <property type="entry name" value="Peptidase_M14_domain"/>
</dbReference>
<dbReference type="PANTHER" id="PTHR11532:SF48">
    <property type="entry name" value="ADIPOCYTE ENHANCER-BINDING PROTEIN 1"/>
    <property type="match status" value="1"/>
</dbReference>
<dbReference type="PANTHER" id="PTHR11532">
    <property type="entry name" value="PROTEASE M14 CARBOXYPEPTIDASE"/>
    <property type="match status" value="1"/>
</dbReference>
<dbReference type="Pfam" id="PF13620">
    <property type="entry name" value="CarboxypepD_reg"/>
    <property type="match status" value="1"/>
</dbReference>
<dbReference type="Pfam" id="PF00754">
    <property type="entry name" value="F5_F8_type_C"/>
    <property type="match status" value="1"/>
</dbReference>
<dbReference type="Pfam" id="PF00246">
    <property type="entry name" value="Peptidase_M14"/>
    <property type="match status" value="1"/>
</dbReference>
<dbReference type="PRINTS" id="PR01217">
    <property type="entry name" value="PRICHEXTENSN"/>
</dbReference>
<dbReference type="SMART" id="SM00231">
    <property type="entry name" value="FA58C"/>
    <property type="match status" value="1"/>
</dbReference>
<dbReference type="SMART" id="SM00631">
    <property type="entry name" value="Zn_pept"/>
    <property type="match status" value="1"/>
</dbReference>
<dbReference type="SUPFAM" id="SSF49464">
    <property type="entry name" value="Carboxypeptidase regulatory domain-like"/>
    <property type="match status" value="1"/>
</dbReference>
<dbReference type="SUPFAM" id="SSF49785">
    <property type="entry name" value="Galactose-binding domain-like"/>
    <property type="match status" value="1"/>
</dbReference>
<dbReference type="SUPFAM" id="SSF53187">
    <property type="entry name" value="Zn-dependent exopeptidases"/>
    <property type="match status" value="1"/>
</dbReference>
<dbReference type="PROSITE" id="PS00132">
    <property type="entry name" value="CARBOXYPEPT_ZN_1"/>
    <property type="match status" value="1"/>
</dbReference>
<dbReference type="PROSITE" id="PS01285">
    <property type="entry name" value="FA58C_1"/>
    <property type="match status" value="1"/>
</dbReference>
<dbReference type="PROSITE" id="PS01286">
    <property type="entry name" value="FA58C_2"/>
    <property type="match status" value="1"/>
</dbReference>
<dbReference type="PROSITE" id="PS50022">
    <property type="entry name" value="FA58C_3"/>
    <property type="match status" value="1"/>
</dbReference>
<dbReference type="PROSITE" id="PS52035">
    <property type="entry name" value="PEPTIDASE_M14"/>
    <property type="match status" value="1"/>
</dbReference>
<accession>A2RUV9</accession>
<name>AEBP1_RAT</name>
<protein>
    <recommendedName>
        <fullName>Adipocyte enhancer-binding protein 1</fullName>
        <shortName>AE-binding protein 1</shortName>
    </recommendedName>
    <alternativeName>
        <fullName>Aortic carboxypeptidase-like protein</fullName>
    </alternativeName>
</protein>
<organism>
    <name type="scientific">Rattus norvegicus</name>
    <name type="common">Rat</name>
    <dbReference type="NCBI Taxonomy" id="10116"/>
    <lineage>
        <taxon>Eukaryota</taxon>
        <taxon>Metazoa</taxon>
        <taxon>Chordata</taxon>
        <taxon>Craniata</taxon>
        <taxon>Vertebrata</taxon>
        <taxon>Euteleostomi</taxon>
        <taxon>Mammalia</taxon>
        <taxon>Eutheria</taxon>
        <taxon>Euarchontoglires</taxon>
        <taxon>Glires</taxon>
        <taxon>Rodentia</taxon>
        <taxon>Myomorpha</taxon>
        <taxon>Muroidea</taxon>
        <taxon>Muridae</taxon>
        <taxon>Murinae</taxon>
        <taxon>Rattus</taxon>
    </lineage>
</organism>
<evidence type="ECO:0000250" key="1"/>
<evidence type="ECO:0000250" key="2">
    <source>
        <dbReference type="UniProtKB" id="Q640N1"/>
    </source>
</evidence>
<evidence type="ECO:0000250" key="3">
    <source>
        <dbReference type="UniProtKB" id="Q8IUX7"/>
    </source>
</evidence>
<evidence type="ECO:0000255" key="4"/>
<evidence type="ECO:0000255" key="5">
    <source>
        <dbReference type="PROSITE-ProRule" id="PRU00081"/>
    </source>
</evidence>
<evidence type="ECO:0000255" key="6">
    <source>
        <dbReference type="PROSITE-ProRule" id="PRU01379"/>
    </source>
</evidence>
<evidence type="ECO:0000256" key="7">
    <source>
        <dbReference type="SAM" id="MobiDB-lite"/>
    </source>
</evidence>
<evidence type="ECO:0000269" key="8">
    <source>
    </source>
</evidence>
<evidence type="ECO:0000269" key="9">
    <source>
    </source>
</evidence>
<evidence type="ECO:0000305" key="10"/>
<comment type="function">
    <text evidence="2 3">As a positive regulator of collagen fibrillogenesis, it is probably involved in the organization and remodeling of the extracellular matrix (By similarity). May positively regulate MAP-kinase activity in adipocytes, leading to enhanced adipocyte proliferation and reduced adipocyte differentiation. May also positively regulate NF-kappa-B activity in macrophages by promoting the phosphorylation and subsequent degradation of I-kappa-B-alpha (NFKBIA), leading to enhanced macrophage inflammatory responsiveness. Can act as a transcriptional repressor.</text>
</comment>
<comment type="subunit">
    <text evidence="2 3">Interacts with different types of collagen, including collagens I, III, and V (By similarity). Interacts with GNG5, NFKBIA, MAPK1, MAPK3 and PTEN. May interact with calmodulin. Interaction with MAPK1 may stimulate DNA-binding. Binds to DNA in vitro.</text>
</comment>
<comment type="subcellular location">
    <subcellularLocation>
        <location evidence="2">Secreted</location>
    </subcellularLocation>
</comment>
<comment type="tissue specificity">
    <text evidence="8 9">Expressed in aorta.</text>
</comment>
<comment type="developmental stage">
    <text evidence="9">Highly expressed in quiescent cells.</text>
</comment>
<comment type="domain">
    <text evidence="3">The F5/8 type C domain binds to different types of collagen, including collagens I, III, and V.</text>
</comment>
<comment type="PTM">
    <text evidence="1">Phosphorylated by MAPK1 in vitro.</text>
</comment>
<comment type="similarity">
    <text evidence="10">Belongs to the peptidase M14 family.</text>
</comment>
<comment type="caution">
    <text evidence="10">Although related to peptidase M14 family, lacks the active site residues and zinc-binding sites, suggesting that it has no carboxypeptidase activity.</text>
</comment>